<proteinExistence type="evidence at protein level"/>
<accession>Q9NEZ5</accession>
<gene>
    <name evidence="9" type="primary">unc-95</name>
    <name evidence="9" type="ORF">Y105E8A.6</name>
</gene>
<evidence type="ECO:0000255" key="1"/>
<evidence type="ECO:0000255" key="2">
    <source>
        <dbReference type="PROSITE-ProRule" id="PRU00125"/>
    </source>
</evidence>
<evidence type="ECO:0000256" key="3">
    <source>
        <dbReference type="SAM" id="MobiDB-lite"/>
    </source>
</evidence>
<evidence type="ECO:0000269" key="4">
    <source>
    </source>
</evidence>
<evidence type="ECO:0000269" key="5">
    <source>
    </source>
</evidence>
<evidence type="ECO:0000303" key="6">
    <source>
    </source>
</evidence>
<evidence type="ECO:0000305" key="7"/>
<evidence type="ECO:0000312" key="8">
    <source>
        <dbReference type="Proteomes" id="UP000001940"/>
    </source>
</evidence>
<evidence type="ECO:0000312" key="9">
    <source>
        <dbReference type="WormBase" id="Y105E8A.6"/>
    </source>
</evidence>
<dbReference type="EMBL" id="BX284601">
    <property type="protein sequence ID" value="CAC48121.2"/>
    <property type="molecule type" value="Genomic_DNA"/>
</dbReference>
<dbReference type="RefSeq" id="NP_740934.2">
    <property type="nucleotide sequence ID" value="NM_170938.4"/>
</dbReference>
<dbReference type="FunCoup" id="Q9NEZ5">
    <property type="interactions" value="21"/>
</dbReference>
<dbReference type="IntAct" id="Q9NEZ5">
    <property type="interactions" value="3"/>
</dbReference>
<dbReference type="STRING" id="6239.Y105E8A.6.1"/>
<dbReference type="PaxDb" id="6239-Y105E8A.6"/>
<dbReference type="PeptideAtlas" id="Q9NEZ5"/>
<dbReference type="EnsemblMetazoa" id="Y105E8A.6.1">
    <property type="protein sequence ID" value="Y105E8A.6.1"/>
    <property type="gene ID" value="WBGene00006824"/>
</dbReference>
<dbReference type="GeneID" id="173301"/>
<dbReference type="KEGG" id="cel:CELE_Y105E8A.6"/>
<dbReference type="UCSC" id="Y105E8A.6">
    <property type="organism name" value="c. elegans"/>
</dbReference>
<dbReference type="AGR" id="WB:WBGene00006824"/>
<dbReference type="CTD" id="173301"/>
<dbReference type="WormBase" id="Y105E8A.6">
    <property type="protein sequence ID" value="CE31857"/>
    <property type="gene ID" value="WBGene00006824"/>
    <property type="gene designation" value="unc-95"/>
</dbReference>
<dbReference type="eggNOG" id="KOG1703">
    <property type="taxonomic scope" value="Eukaryota"/>
</dbReference>
<dbReference type="HOGENOM" id="CLU_071917_0_0_1"/>
<dbReference type="InParanoid" id="Q9NEZ5"/>
<dbReference type="OMA" id="YCHDCFY"/>
<dbReference type="OrthoDB" id="15567at2759"/>
<dbReference type="PRO" id="PR:Q9NEZ5"/>
<dbReference type="Proteomes" id="UP000001940">
    <property type="component" value="Chromosome I"/>
</dbReference>
<dbReference type="Bgee" id="WBGene00006824">
    <property type="expression patterns" value="Expressed in larva and 3 other cell types or tissues"/>
</dbReference>
<dbReference type="GO" id="GO:0005925">
    <property type="term" value="C:focal adhesion"/>
    <property type="evidence" value="ECO:0007669"/>
    <property type="project" value="UniProtKB-SubCell"/>
</dbReference>
<dbReference type="GO" id="GO:0031430">
    <property type="term" value="C:M band"/>
    <property type="evidence" value="ECO:0000314"/>
    <property type="project" value="UniProtKB"/>
</dbReference>
<dbReference type="GO" id="GO:0005634">
    <property type="term" value="C:nucleus"/>
    <property type="evidence" value="ECO:0000314"/>
    <property type="project" value="WormBase"/>
</dbReference>
<dbReference type="GO" id="GO:0005886">
    <property type="term" value="C:plasma membrane"/>
    <property type="evidence" value="ECO:0007669"/>
    <property type="project" value="UniProtKB-SubCell"/>
</dbReference>
<dbReference type="GO" id="GO:0055120">
    <property type="term" value="C:striated muscle dense body"/>
    <property type="evidence" value="ECO:0000314"/>
    <property type="project" value="UniProtKB"/>
</dbReference>
<dbReference type="GO" id="GO:0046872">
    <property type="term" value="F:metal ion binding"/>
    <property type="evidence" value="ECO:0007669"/>
    <property type="project" value="UniProtKB-KW"/>
</dbReference>
<dbReference type="GO" id="GO:0019904">
    <property type="term" value="F:protein domain specific binding"/>
    <property type="evidence" value="ECO:0000353"/>
    <property type="project" value="WormBase"/>
</dbReference>
<dbReference type="CDD" id="cd09339">
    <property type="entry name" value="LIM4_Paxillin_like"/>
    <property type="match status" value="1"/>
</dbReference>
<dbReference type="FunFam" id="2.10.110.10:FF:000009">
    <property type="entry name" value="Paxillin isoform 1"/>
    <property type="match status" value="1"/>
</dbReference>
<dbReference type="Gene3D" id="2.10.110.10">
    <property type="entry name" value="Cysteine Rich Protein"/>
    <property type="match status" value="1"/>
</dbReference>
<dbReference type="InterPro" id="IPR001781">
    <property type="entry name" value="Znf_LIM"/>
</dbReference>
<dbReference type="Pfam" id="PF00412">
    <property type="entry name" value="LIM"/>
    <property type="match status" value="1"/>
</dbReference>
<dbReference type="SMART" id="SM00132">
    <property type="entry name" value="LIM"/>
    <property type="match status" value="1"/>
</dbReference>
<dbReference type="PROSITE" id="PS00478">
    <property type="entry name" value="LIM_DOMAIN_1"/>
    <property type="match status" value="1"/>
</dbReference>
<dbReference type="PROSITE" id="PS50023">
    <property type="entry name" value="LIM_DOMAIN_2"/>
    <property type="match status" value="1"/>
</dbReference>
<keyword id="KW-0965">Cell junction</keyword>
<keyword id="KW-1003">Cell membrane</keyword>
<keyword id="KW-0175">Coiled coil</keyword>
<keyword id="KW-0963">Cytoplasm</keyword>
<keyword id="KW-0440">LIM domain</keyword>
<keyword id="KW-0472">Membrane</keyword>
<keyword id="KW-0479">Metal-binding</keyword>
<keyword id="KW-0539">Nucleus</keyword>
<keyword id="KW-1185">Reference proteome</keyword>
<keyword id="KW-0832">Ubl conjugation</keyword>
<keyword id="KW-0862">Zinc</keyword>
<comment type="function">
    <text evidence="4 5">Required for the assembly and integrity of muscle dense bodies, which establish the adhesion sites of the muscle cells to the extracellular matrix (PubMed:15210732, PubMed:20385102). Decreased localization of unc-95 to dense bodies and their subsequent dissociation plays an important role in ecdysis during molting (PubMed:20385102). Involved in the organization of the muscle sarcomeric structure and thereby required for locomotion (PubMed:15210732).</text>
</comment>
<comment type="interaction">
    <interactant intactId="EBI-2913259">
        <id>Q9NEZ5</id>
    </interactant>
    <interactant intactId="EBI-317283">
        <id>Q17549</id>
        <label>magu-2</label>
    </interactant>
    <organismsDiffer>false</organismsDiffer>
    <experiments>3</experiments>
</comment>
<comment type="interaction">
    <interactant intactId="EBI-2913259">
        <id>Q9NEZ5</id>
    </interactant>
    <interactant intactId="EBI-318782">
        <id>Q9NAN2</id>
        <label>par-6</label>
    </interactant>
    <organismsDiffer>false</organismsDiffer>
    <experiments>3</experiments>
</comment>
<comment type="subcellular location">
    <subcellularLocation>
        <location evidence="4 5">Cytoplasm</location>
    </subcellularLocation>
    <subcellularLocation>
        <location evidence="4 5">Nucleus</location>
    </subcellularLocation>
    <subcellularLocation>
        <location evidence="4 5">Cell membrane</location>
        <topology evidence="7">Peripheral membrane protein</topology>
    </subcellularLocation>
    <subcellularLocation>
        <location evidence="4">Cytoplasm</location>
        <location evidence="4">Myofibril</location>
        <location evidence="4">Sarcomere</location>
        <location evidence="4">M line</location>
    </subcellularLocation>
    <subcellularLocation>
        <location evidence="4 5">Cell junction</location>
    </subcellularLocation>
    <subcellularLocation>
        <location evidence="4 5">Cell junction</location>
        <location evidence="4 5">Focal adhesion</location>
    </subcellularLocation>
    <text evidence="4 5">Localized in the cytoplasm in comma stage embryos, and gradually becomes more localized at the membrane in the 1.5- and 2-fold stage embryos. In the threefold embryo, associated with dense bodies at the cell membrane, but also present in the cytoplasm. Nuclear localization from the threefold stage embryo as well. In adult animals, localized in dense bodies, M-lines, muscle-muscle cell boundaries, cytoplasm and nucleus (PubMed:15210732). Decreased localization to dense bodies during the L2/L3 molt (PubMed:20385102).</text>
</comment>
<comment type="tissue specificity">
    <text evidence="4 5">Expressed in the body wall muscles, vulval muscles and the anal muscles (PubMed:15210732, PubMed:20385102). Expressed in the muscle arms of the head muscle cells that form neuromuscular junctions and in the anal depressor muscle (PubMed:15210732).</text>
</comment>
<comment type="developmental stage">
    <text evidence="4 5">Expressed during embryogenesis, in larvae and in adult animals.</text>
</comment>
<comment type="PTM">
    <text evidence="5">Ubiquitinated. Ubiquitination by rnf-5 leads to dissociation from muscle dense bodies during molting and is required for ecdysis.</text>
</comment>
<comment type="disruption phenotype">
    <text evidence="4">RNAi-mediated knockdown leads to disorganized actin-containing I band filaments, disorganized dense bodies in the muscles and reduced motility.</text>
</comment>
<organism evidence="8">
    <name type="scientific">Caenorhabditis elegans</name>
    <dbReference type="NCBI Taxonomy" id="6239"/>
    <lineage>
        <taxon>Eukaryota</taxon>
        <taxon>Metazoa</taxon>
        <taxon>Ecdysozoa</taxon>
        <taxon>Nematoda</taxon>
        <taxon>Chromadorea</taxon>
        <taxon>Rhabditida</taxon>
        <taxon>Rhabditina</taxon>
        <taxon>Rhabditomorpha</taxon>
        <taxon>Rhabditoidea</taxon>
        <taxon>Rhabditidae</taxon>
        <taxon>Peloderinae</taxon>
        <taxon>Caenorhabditis</taxon>
    </lineage>
</organism>
<feature type="chain" id="PRO_0000445243" description="LIM domain-containing protein unc-95">
    <location>
        <begin position="1"/>
        <end position="350"/>
    </location>
</feature>
<feature type="domain" description="LIM zinc-binding" evidence="2">
    <location>
        <begin position="268"/>
        <end position="334"/>
    </location>
</feature>
<feature type="region of interest" description="Disordered" evidence="3">
    <location>
        <begin position="1"/>
        <end position="65"/>
    </location>
</feature>
<feature type="region of interest" description="Disordered" evidence="3">
    <location>
        <begin position="177"/>
        <end position="198"/>
    </location>
</feature>
<feature type="region of interest" description="Disordered" evidence="3">
    <location>
        <begin position="206"/>
        <end position="225"/>
    </location>
</feature>
<feature type="region of interest" description="Disordered" evidence="3">
    <location>
        <begin position="235"/>
        <end position="262"/>
    </location>
</feature>
<feature type="coiled-coil region" evidence="1">
    <location>
        <begin position="83"/>
        <end position="110"/>
    </location>
</feature>
<feature type="compositionally biased region" description="Polar residues" evidence="3">
    <location>
        <begin position="1"/>
        <end position="37"/>
    </location>
</feature>
<feature type="compositionally biased region" description="Basic and acidic residues" evidence="3">
    <location>
        <begin position="45"/>
        <end position="65"/>
    </location>
</feature>
<feature type="mutagenesis site" description="In su33; loss of localization to muscle-muscle cell boundaries. Aberrant sarcomeric structure in the muscle with disorganized actin-containing filaments (I band), myosin-containing filaments (A band), M-lines and disorganized dense bodies, indicating a failure to assemble normal muscle adhesion structures. Loss of recruitment of deb-1/vinculin to nascent muscle attachments during embryogenesis." evidence="4">
    <location>
        <begin position="144"/>
        <end position="350"/>
    </location>
</feature>
<sequence>MTISPQPSHQQFESYQWTTESRSSQQRHGTGTPSQDGRLSAIPDPVERHVARWRSESRNSNKDKVFRNDEEFSQQDEIVNGTLTALKNDVEQTTEIIRRKQEQMRMERRQFQTEMEVNGRISIDPTDDWLAARLKAVSSDDMNQQLVKLKQDQRQNAVTDTLAALVYDVNATTEVLRRGQRGRDGEDGNKKKKEEIEYTLRLTPAPEEQIPQRPKIPEDDNMETDDYSRQYGVQMSEETDSLRRRRARSTTPRRTLHISGSPPPPAAAVCAYCSEEIDGAILTALAPNSERAQKFHTYHFMCTYCQKALNMHGTYREHDLKPYCHDCFYKLYNGLQYAPDDHQASIEKLI</sequence>
<name>UNC95_CAEEL</name>
<protein>
    <recommendedName>
        <fullName evidence="6">LIM domain-containing protein unc-95</fullName>
    </recommendedName>
</protein>
<reference evidence="8" key="1">
    <citation type="journal article" date="1998" name="Science">
        <title>Genome sequence of the nematode C. elegans: a platform for investigating biology.</title>
        <authorList>
            <consortium name="The C. elegans sequencing consortium"/>
        </authorList>
    </citation>
    <scope>NUCLEOTIDE SEQUENCE [LARGE SCALE GENOMIC DNA]</scope>
    <source>
        <strain evidence="8">Bristol N2</strain>
    </source>
</reference>
<reference evidence="7" key="2">
    <citation type="journal article" date="2004" name="J. Cell Biol.">
        <title>The LIM domain protein UNC-95 is required for the assembly of muscle attachment structures and is regulated by the RING finger protein RNF-5 in C. elegans.</title>
        <authorList>
            <person name="Broday L."/>
            <person name="Kolotuev I."/>
            <person name="Didier C."/>
            <person name="Bhoumik A."/>
            <person name="Podbilewicz B."/>
            <person name="Ronai Z."/>
        </authorList>
    </citation>
    <scope>FUNCTION</scope>
    <scope>SUBCELLULAR LOCATION</scope>
    <scope>TISSUE SPECIFICITY</scope>
    <scope>DEVELOPMENTAL STAGE</scope>
    <scope>DISRUPTION PHENOTYPE</scope>
    <scope>MUTAGENESIS OF 144-GLN--ILE-350</scope>
</reference>
<reference evidence="7" key="3">
    <citation type="journal article" date="2010" name="Biochem. Biophys. Res. Commun.">
        <title>Molting-specific downregulation of C. elegans body-wall muscle attachment sites: the role of RNF-5 E3 ligase.</title>
        <authorList>
            <person name="Zaidel-Bar R."/>
            <person name="Miller S."/>
            <person name="Kaminsky R."/>
            <person name="Broday L."/>
        </authorList>
    </citation>
    <scope>FUNCTION</scope>
    <scope>SUBCELLULAR LOCATION</scope>
    <scope>TISSUE SPECIFICITY</scope>
    <scope>DEVELOPMENTAL STAGE</scope>
    <scope>UBIQUITINATION BY RNF-5</scope>
</reference>